<protein>
    <recommendedName>
        <fullName>Glutamyl-tRNA reductase, chloroplastic</fullName>
        <shortName>GluTR</shortName>
        <ecNumber>1.2.1.70</ecNumber>
    </recommendedName>
</protein>
<evidence type="ECO:0000250" key="1"/>
<evidence type="ECO:0000255" key="2"/>
<evidence type="ECO:0000305" key="3"/>
<organism>
    <name type="scientific">Oryza sativa subsp. japonica</name>
    <name type="common">Rice</name>
    <dbReference type="NCBI Taxonomy" id="39947"/>
    <lineage>
        <taxon>Eukaryota</taxon>
        <taxon>Viridiplantae</taxon>
        <taxon>Streptophyta</taxon>
        <taxon>Embryophyta</taxon>
        <taxon>Tracheophyta</taxon>
        <taxon>Spermatophyta</taxon>
        <taxon>Magnoliopsida</taxon>
        <taxon>Liliopsida</taxon>
        <taxon>Poales</taxon>
        <taxon>Poaceae</taxon>
        <taxon>BOP clade</taxon>
        <taxon>Oryzoideae</taxon>
        <taxon>Oryzeae</taxon>
        <taxon>Oryzinae</taxon>
        <taxon>Oryza</taxon>
        <taxon>Oryza sativa</taxon>
    </lineage>
</organism>
<accession>P0C587</accession>
<accession>A0A0P0XVV7</accession>
<accession>O48674</accession>
<accession>Q0IWL0</accession>
<accession>Q337F6</accession>
<accession>Q8LNE9</accession>
<accession>Q9FW00</accession>
<name>HEM1_ORYSJ</name>
<keyword id="KW-0149">Chlorophyll biosynthesis</keyword>
<keyword id="KW-0150">Chloroplast</keyword>
<keyword id="KW-0521">NADP</keyword>
<keyword id="KW-0560">Oxidoreductase</keyword>
<keyword id="KW-0934">Plastid</keyword>
<keyword id="KW-0627">Porphyrin biosynthesis</keyword>
<keyword id="KW-1185">Reference proteome</keyword>
<keyword id="KW-0809">Transit peptide</keyword>
<gene>
    <name type="ordered locus">Os10g0502400</name>
    <name type="ordered locus">LOC_Os10g35840</name>
    <name type="ORF">OSJNBa0078O01.14</name>
    <name type="ORF">OSJNBb0073N24.1</name>
</gene>
<dbReference type="EC" id="1.2.1.70"/>
<dbReference type="EMBL" id="AC078840">
    <property type="protein sequence ID" value="AAG13620.1"/>
    <property type="status" value="ALT_INIT"/>
    <property type="molecule type" value="Genomic_DNA"/>
</dbReference>
<dbReference type="EMBL" id="AC079888">
    <property type="protein sequence ID" value="AAM93670.1"/>
    <property type="molecule type" value="Genomic_DNA"/>
</dbReference>
<dbReference type="EMBL" id="DP000086">
    <property type="protein sequence ID" value="ABB47844.1"/>
    <property type="molecule type" value="Genomic_DNA"/>
</dbReference>
<dbReference type="EMBL" id="AP008216">
    <property type="protein sequence ID" value="BAF26905.1"/>
    <property type="molecule type" value="Genomic_DNA"/>
</dbReference>
<dbReference type="EMBL" id="AP014966">
    <property type="protein sequence ID" value="BAT11537.1"/>
    <property type="molecule type" value="Genomic_DNA"/>
</dbReference>
<dbReference type="EMBL" id="AK099393">
    <property type="status" value="NOT_ANNOTATED_CDS"/>
    <property type="molecule type" value="mRNA"/>
</dbReference>
<dbReference type="RefSeq" id="XP_015614701.1">
    <property type="nucleotide sequence ID" value="XM_015759215.1"/>
</dbReference>
<dbReference type="SMR" id="P0C587"/>
<dbReference type="FunCoup" id="P0C587">
    <property type="interactions" value="319"/>
</dbReference>
<dbReference type="STRING" id="39947.P0C587"/>
<dbReference type="PaxDb" id="39947-P0C587"/>
<dbReference type="EnsemblPlants" id="Os10t0502400-01">
    <property type="protein sequence ID" value="Os10t0502400-01"/>
    <property type="gene ID" value="Os10g0502400"/>
</dbReference>
<dbReference type="Gramene" id="Os10t0502400-01">
    <property type="protein sequence ID" value="Os10t0502400-01"/>
    <property type="gene ID" value="Os10g0502400"/>
</dbReference>
<dbReference type="KEGG" id="dosa:Os10g0502400"/>
<dbReference type="eggNOG" id="ENOG502QQ1H">
    <property type="taxonomic scope" value="Eukaryota"/>
</dbReference>
<dbReference type="InParanoid" id="P0C587"/>
<dbReference type="OMA" id="FAFKCAA"/>
<dbReference type="OrthoDB" id="424281at2759"/>
<dbReference type="PlantReactome" id="R-OSA-4827054">
    <property type="pathway name" value="Tetrapyrrole biosynthesis I"/>
</dbReference>
<dbReference type="UniPathway" id="UPA00251">
    <property type="reaction ID" value="UER00316"/>
</dbReference>
<dbReference type="Proteomes" id="UP000000763">
    <property type="component" value="Chromosome 10"/>
</dbReference>
<dbReference type="Proteomes" id="UP000059680">
    <property type="component" value="Chromosome 10"/>
</dbReference>
<dbReference type="ExpressionAtlas" id="P0C587">
    <property type="expression patterns" value="baseline and differential"/>
</dbReference>
<dbReference type="GO" id="GO:0009507">
    <property type="term" value="C:chloroplast"/>
    <property type="evidence" value="ECO:0007669"/>
    <property type="project" value="UniProtKB-SubCell"/>
</dbReference>
<dbReference type="GO" id="GO:0008883">
    <property type="term" value="F:glutamyl-tRNA reductase activity"/>
    <property type="evidence" value="ECO:0007669"/>
    <property type="project" value="UniProtKB-EC"/>
</dbReference>
<dbReference type="GO" id="GO:0050661">
    <property type="term" value="F:NADP binding"/>
    <property type="evidence" value="ECO:0007669"/>
    <property type="project" value="InterPro"/>
</dbReference>
<dbReference type="GO" id="GO:0015995">
    <property type="term" value="P:chlorophyll biosynthetic process"/>
    <property type="evidence" value="ECO:0007669"/>
    <property type="project" value="UniProtKB-KW"/>
</dbReference>
<dbReference type="GO" id="GO:0006782">
    <property type="term" value="P:protoporphyrinogen IX biosynthetic process"/>
    <property type="evidence" value="ECO:0007669"/>
    <property type="project" value="UniProtKB-UniPathway"/>
</dbReference>
<dbReference type="CDD" id="cd05213">
    <property type="entry name" value="NAD_bind_Glutamyl_tRNA_reduct"/>
    <property type="match status" value="1"/>
</dbReference>
<dbReference type="FunFam" id="3.30.460.30:FF:000001">
    <property type="entry name" value="Glutamyl-tRNA reductase"/>
    <property type="match status" value="1"/>
</dbReference>
<dbReference type="FunFam" id="3.40.50.720:FF:000031">
    <property type="entry name" value="Glutamyl-tRNA reductase"/>
    <property type="match status" value="1"/>
</dbReference>
<dbReference type="Gene3D" id="3.30.460.30">
    <property type="entry name" value="Glutamyl-tRNA reductase, N-terminal domain"/>
    <property type="match status" value="1"/>
</dbReference>
<dbReference type="Gene3D" id="3.40.50.720">
    <property type="entry name" value="NAD(P)-binding Rossmann-like Domain"/>
    <property type="match status" value="1"/>
</dbReference>
<dbReference type="HAMAP" id="MF_00087">
    <property type="entry name" value="Glu_tRNA_reductase"/>
    <property type="match status" value="1"/>
</dbReference>
<dbReference type="InterPro" id="IPR000343">
    <property type="entry name" value="4pyrrol_synth_GluRdtase"/>
</dbReference>
<dbReference type="InterPro" id="IPR015896">
    <property type="entry name" value="4pyrrol_synth_GluRdtase_dimer"/>
</dbReference>
<dbReference type="InterPro" id="IPR015895">
    <property type="entry name" value="4pyrrol_synth_GluRdtase_N"/>
</dbReference>
<dbReference type="InterPro" id="IPR018214">
    <property type="entry name" value="GluRdtase_CS"/>
</dbReference>
<dbReference type="InterPro" id="IPR036453">
    <property type="entry name" value="GluRdtase_dimer_dom_sf"/>
</dbReference>
<dbReference type="InterPro" id="IPR036343">
    <property type="entry name" value="GluRdtase_N_sf"/>
</dbReference>
<dbReference type="InterPro" id="IPR036291">
    <property type="entry name" value="NAD(P)-bd_dom_sf"/>
</dbReference>
<dbReference type="InterPro" id="IPR006151">
    <property type="entry name" value="Shikm_DH/Glu-tRNA_Rdtase"/>
</dbReference>
<dbReference type="NCBIfam" id="TIGR01035">
    <property type="entry name" value="hemA"/>
    <property type="match status" value="1"/>
</dbReference>
<dbReference type="PANTHER" id="PTHR43120">
    <property type="entry name" value="GLUTAMYL-TRNA REDUCTASE 1, CHLOROPLASTIC"/>
    <property type="match status" value="1"/>
</dbReference>
<dbReference type="PANTHER" id="PTHR43120:SF1">
    <property type="entry name" value="GLUTAMYL-TRNA REDUCTASE 1, CHLOROPLASTIC"/>
    <property type="match status" value="1"/>
</dbReference>
<dbReference type="Pfam" id="PF00745">
    <property type="entry name" value="GlutR_dimer"/>
    <property type="match status" value="1"/>
</dbReference>
<dbReference type="Pfam" id="PF05201">
    <property type="entry name" value="GlutR_N"/>
    <property type="match status" value="1"/>
</dbReference>
<dbReference type="Pfam" id="PF01488">
    <property type="entry name" value="Shikimate_DH"/>
    <property type="match status" value="1"/>
</dbReference>
<dbReference type="SUPFAM" id="SSF69742">
    <property type="entry name" value="Glutamyl tRNA-reductase catalytic, N-terminal domain"/>
    <property type="match status" value="1"/>
</dbReference>
<dbReference type="SUPFAM" id="SSF69075">
    <property type="entry name" value="Glutamyl tRNA-reductase dimerization domain"/>
    <property type="match status" value="1"/>
</dbReference>
<dbReference type="SUPFAM" id="SSF51735">
    <property type="entry name" value="NAD(P)-binding Rossmann-fold domains"/>
    <property type="match status" value="1"/>
</dbReference>
<dbReference type="PROSITE" id="PS00747">
    <property type="entry name" value="GLUTR"/>
    <property type="match status" value="1"/>
</dbReference>
<comment type="function">
    <text evidence="1">Catalyzes the NADPH-dependent reduction of glutamyl-tRNA(Glu) to glutamate 1-semialdehyde (GSA).</text>
</comment>
<comment type="catalytic activity">
    <reaction>
        <text>(S)-4-amino-5-oxopentanoate + tRNA(Glu) + NADP(+) = L-glutamyl-tRNA(Glu) + NADPH + H(+)</text>
        <dbReference type="Rhea" id="RHEA:12344"/>
        <dbReference type="Rhea" id="RHEA-COMP:9663"/>
        <dbReference type="Rhea" id="RHEA-COMP:9680"/>
        <dbReference type="ChEBI" id="CHEBI:15378"/>
        <dbReference type="ChEBI" id="CHEBI:57501"/>
        <dbReference type="ChEBI" id="CHEBI:57783"/>
        <dbReference type="ChEBI" id="CHEBI:58349"/>
        <dbReference type="ChEBI" id="CHEBI:78442"/>
        <dbReference type="ChEBI" id="CHEBI:78520"/>
        <dbReference type="EC" id="1.2.1.70"/>
    </reaction>
</comment>
<comment type="pathway">
    <text>Porphyrin-containing compound metabolism; protoporphyrin-IX biosynthesis; 5-aminolevulinate from L-glutamyl-tRNA(Glu): step 1/2.</text>
</comment>
<comment type="subcellular location">
    <subcellularLocation>
        <location evidence="1">Plastid</location>
        <location evidence="1">Chloroplast</location>
    </subcellularLocation>
</comment>
<comment type="miscellaneous">
    <text evidence="1">During catalysis, the active site Cys acts as a nucleophile attacking the alpha-carbonyl group of tRNA-bound glutamate with the formation of a thioester intermediate between enzyme and glutamate, and the concomitant release of tRNA(Glu). The thioester intermediate is finally reduced by direct hydride transfer from NADPH, to form the product GSA (By similarity).</text>
</comment>
<comment type="similarity">
    <text evidence="3">Belongs to the glutamyl-tRNA reductase family.</text>
</comment>
<comment type="sequence caution" evidence="3">
    <conflict type="erroneous initiation">
        <sequence resource="EMBL-CDS" id="AAG13620"/>
    </conflict>
</comment>
<reference key="1">
    <citation type="journal article" date="2003" name="Science">
        <title>In-depth view of structure, activity, and evolution of rice chromosome 10.</title>
        <authorList>
            <person name="Yu Y."/>
            <person name="Rambo T."/>
            <person name="Currie J."/>
            <person name="Saski C."/>
            <person name="Kim H.-R."/>
            <person name="Collura K."/>
            <person name="Thompson S."/>
            <person name="Simmons J."/>
            <person name="Yang T.-J."/>
            <person name="Nah G."/>
            <person name="Patel A.J."/>
            <person name="Thurmond S."/>
            <person name="Henry D."/>
            <person name="Oates R."/>
            <person name="Palmer M."/>
            <person name="Pries G."/>
            <person name="Gibson J."/>
            <person name="Anderson H."/>
            <person name="Paradkar M."/>
            <person name="Crane L."/>
            <person name="Dale J."/>
            <person name="Carver M.B."/>
            <person name="Wood T."/>
            <person name="Frisch D."/>
            <person name="Engler F."/>
            <person name="Soderlund C."/>
            <person name="Palmer L.E."/>
            <person name="Teytelman L."/>
            <person name="Nascimento L."/>
            <person name="De la Bastide M."/>
            <person name="Spiegel L."/>
            <person name="Ware D."/>
            <person name="O'Shaughnessy A."/>
            <person name="Dike S."/>
            <person name="Dedhia N."/>
            <person name="Preston R."/>
            <person name="Huang E."/>
            <person name="Ferraro K."/>
            <person name="Kuit K."/>
            <person name="Miller B."/>
            <person name="Zutavern T."/>
            <person name="Katzenberger F."/>
            <person name="Muller S."/>
            <person name="Balija V."/>
            <person name="Martienssen R.A."/>
            <person name="Stein L."/>
            <person name="Minx P."/>
            <person name="Johnson D."/>
            <person name="Cordum H."/>
            <person name="Mardis E."/>
            <person name="Cheng Z."/>
            <person name="Jiang J."/>
            <person name="Wilson R."/>
            <person name="McCombie W.R."/>
            <person name="Wing R.A."/>
            <person name="Yuan Q."/>
            <person name="Ouyang S."/>
            <person name="Liu J."/>
            <person name="Jones K.M."/>
            <person name="Gansberger K."/>
            <person name="Moffat K."/>
            <person name="Hill J."/>
            <person name="Tsitrin T."/>
            <person name="Overton L."/>
            <person name="Bera J."/>
            <person name="Kim M."/>
            <person name="Jin S."/>
            <person name="Tallon L."/>
            <person name="Ciecko A."/>
            <person name="Pai G."/>
            <person name="Van Aken S."/>
            <person name="Utterback T."/>
            <person name="Reidmuller S."/>
            <person name="Bormann J."/>
            <person name="Feldblyum T."/>
            <person name="Hsiao J."/>
            <person name="Zismann V."/>
            <person name="Blunt S."/>
            <person name="de Vazeille A.R."/>
            <person name="Shaffer T."/>
            <person name="Koo H."/>
            <person name="Suh B."/>
            <person name="Yang Q."/>
            <person name="Haas B."/>
            <person name="Peterson J."/>
            <person name="Pertea M."/>
            <person name="Volfovsky N."/>
            <person name="Wortman J."/>
            <person name="White O."/>
            <person name="Salzberg S.L."/>
            <person name="Fraser C.M."/>
            <person name="Buell C.R."/>
            <person name="Messing J."/>
            <person name="Song R."/>
            <person name="Fuks G."/>
            <person name="Llaca V."/>
            <person name="Kovchak S."/>
            <person name="Young S."/>
            <person name="Bowers J.E."/>
            <person name="Paterson A.H."/>
            <person name="Johns M.A."/>
            <person name="Mao L."/>
            <person name="Pan H."/>
            <person name="Dean R.A."/>
        </authorList>
    </citation>
    <scope>NUCLEOTIDE SEQUENCE [LARGE SCALE GENOMIC DNA]</scope>
    <source>
        <strain>cv. Nipponbare</strain>
    </source>
</reference>
<reference key="2">
    <citation type="journal article" date="2005" name="Nature">
        <title>The map-based sequence of the rice genome.</title>
        <authorList>
            <consortium name="International rice genome sequencing project (IRGSP)"/>
        </authorList>
    </citation>
    <scope>NUCLEOTIDE SEQUENCE [LARGE SCALE GENOMIC DNA]</scope>
    <source>
        <strain>cv. Nipponbare</strain>
    </source>
</reference>
<reference key="3">
    <citation type="journal article" date="2008" name="Nucleic Acids Res.">
        <title>The rice annotation project database (RAP-DB): 2008 update.</title>
        <authorList>
            <consortium name="The rice annotation project (RAP)"/>
        </authorList>
    </citation>
    <scope>GENOME REANNOTATION</scope>
    <source>
        <strain>cv. Nipponbare</strain>
    </source>
</reference>
<reference key="4">
    <citation type="journal article" date="2013" name="Rice">
        <title>Improvement of the Oryza sativa Nipponbare reference genome using next generation sequence and optical map data.</title>
        <authorList>
            <person name="Kawahara Y."/>
            <person name="de la Bastide M."/>
            <person name="Hamilton J.P."/>
            <person name="Kanamori H."/>
            <person name="McCombie W.R."/>
            <person name="Ouyang S."/>
            <person name="Schwartz D.C."/>
            <person name="Tanaka T."/>
            <person name="Wu J."/>
            <person name="Zhou S."/>
            <person name="Childs K.L."/>
            <person name="Davidson R.M."/>
            <person name="Lin H."/>
            <person name="Quesada-Ocampo L."/>
            <person name="Vaillancourt B."/>
            <person name="Sakai H."/>
            <person name="Lee S.S."/>
            <person name="Kim J."/>
            <person name="Numa H."/>
            <person name="Itoh T."/>
            <person name="Buell C.R."/>
            <person name="Matsumoto T."/>
        </authorList>
    </citation>
    <scope>GENOME REANNOTATION</scope>
    <source>
        <strain>cv. Nipponbare</strain>
    </source>
</reference>
<reference key="5">
    <citation type="journal article" date="2003" name="Science">
        <title>Collection, mapping, and annotation of over 28,000 cDNA clones from japonica rice.</title>
        <authorList>
            <consortium name="The rice full-length cDNA consortium"/>
        </authorList>
    </citation>
    <scope>NUCLEOTIDE SEQUENCE [LARGE SCALE MRNA]</scope>
    <source>
        <strain>cv. Nipponbare</strain>
    </source>
</reference>
<sequence length="537" mass="58419">MMASTTSATAAGGAFAAAKTRAGSSAAGGGACARVAAGGRRRSGVVVRCDAGVEAQAQAQAVAKAASVAALEQFKISADRYMKERSSIAVIGLSVHTAPVEMREKLAVAEELWPRAISELTSLNHIEEAAVLSTCNRMEIYVVALSWNRGIREVVDWMSKKSGIPASELREHLFMLRDSDATRHLFEVSAGLDSLVLGEGQILAQVKQVVRSGQNSGGLGKNIDRMFKDAITAGKRVRCETNISSGAVSVSSAAVELALMKLPKSECLSARMLLIGAGKMGKLVVKHLIAKGCKKVVVVNRSVERVDAIREEMKDIEIVYRPLTEMYEAAAEADVVFTSTASETPLFTKEHAEALPAISDAMGGVRLFVDISVPRNVSACVSEVGHARVYNVDDLKEVVEANKEDRLRKAMEAQTIITQELKRFEAWRDSLETVPTIKKLRSYADRIRASELEKCLQKIGEDALTKKMRRSIEELSTGIVNKLLHGPLQHLRCDGSDSRTLDETLENMHALNRMFSLDTEKAIIEQKIKAKVEKSQN</sequence>
<proteinExistence type="evidence at transcript level"/>
<feature type="transit peptide" description="Chloroplast" evidence="2">
    <location>
        <begin position="1"/>
        <end position="48"/>
    </location>
</feature>
<feature type="chain" id="PRO_0000013313" description="Glutamyl-tRNA reductase, chloroplastic">
    <location>
        <begin position="49"/>
        <end position="537"/>
    </location>
</feature>
<feature type="active site" description="Nucleophile" evidence="1">
    <location>
        <position position="135"/>
    </location>
</feature>
<feature type="binding site" evidence="1">
    <location>
        <begin position="134"/>
        <end position="137"/>
    </location>
    <ligand>
        <name>substrate</name>
    </ligand>
</feature>
<feature type="binding site" evidence="1">
    <location>
        <position position="194"/>
    </location>
    <ligand>
        <name>substrate</name>
    </ligand>
</feature>
<feature type="binding site" evidence="1">
    <location>
        <begin position="199"/>
        <end position="201"/>
    </location>
    <ligand>
        <name>substrate</name>
    </ligand>
</feature>
<feature type="binding site" evidence="1">
    <location>
        <position position="205"/>
    </location>
    <ligand>
        <name>substrate</name>
    </ligand>
</feature>
<feature type="binding site" evidence="1">
    <location>
        <begin position="276"/>
        <end position="281"/>
    </location>
    <ligand>
        <name>NADP(+)</name>
        <dbReference type="ChEBI" id="CHEBI:58349"/>
    </ligand>
</feature>
<feature type="site" description="Important for activity" evidence="1">
    <location>
        <position position="184"/>
    </location>
</feature>
<feature type="sequence conflict" description="In Ref. 5; AK099393." evidence="3" ref="5">
    <original>L</original>
    <variation>F</variation>
    <location>
        <position position="346"/>
    </location>
</feature>